<gene>
    <name evidence="1" type="primary">ybeY</name>
    <name type="ordered locus">SAK_1527</name>
</gene>
<reference key="1">
    <citation type="journal article" date="2005" name="Proc. Natl. Acad. Sci. U.S.A.">
        <title>Genome analysis of multiple pathogenic isolates of Streptococcus agalactiae: implications for the microbial 'pan-genome'.</title>
        <authorList>
            <person name="Tettelin H."/>
            <person name="Masignani V."/>
            <person name="Cieslewicz M.J."/>
            <person name="Donati C."/>
            <person name="Medini D."/>
            <person name="Ward N.L."/>
            <person name="Angiuoli S.V."/>
            <person name="Crabtree J."/>
            <person name="Jones A.L."/>
            <person name="Durkin A.S."/>
            <person name="DeBoy R.T."/>
            <person name="Davidsen T.M."/>
            <person name="Mora M."/>
            <person name="Scarselli M."/>
            <person name="Margarit y Ros I."/>
            <person name="Peterson J.D."/>
            <person name="Hauser C.R."/>
            <person name="Sundaram J.P."/>
            <person name="Nelson W.C."/>
            <person name="Madupu R."/>
            <person name="Brinkac L.M."/>
            <person name="Dodson R.J."/>
            <person name="Rosovitz M.J."/>
            <person name="Sullivan S.A."/>
            <person name="Daugherty S.C."/>
            <person name="Haft D.H."/>
            <person name="Selengut J."/>
            <person name="Gwinn M.L."/>
            <person name="Zhou L."/>
            <person name="Zafar N."/>
            <person name="Khouri H."/>
            <person name="Radune D."/>
            <person name="Dimitrov G."/>
            <person name="Watkins K."/>
            <person name="O'Connor K.J."/>
            <person name="Smith S."/>
            <person name="Utterback T.R."/>
            <person name="White O."/>
            <person name="Rubens C.E."/>
            <person name="Grandi G."/>
            <person name="Madoff L.C."/>
            <person name="Kasper D.L."/>
            <person name="Telford J.L."/>
            <person name="Wessels M.R."/>
            <person name="Rappuoli R."/>
            <person name="Fraser C.M."/>
        </authorList>
    </citation>
    <scope>NUCLEOTIDE SEQUENCE [LARGE SCALE GENOMIC DNA]</scope>
    <source>
        <strain>ATCC 27591 / A909 / CDC SS700</strain>
    </source>
</reference>
<proteinExistence type="inferred from homology"/>
<accession>Q3K020</accession>
<organism>
    <name type="scientific">Streptococcus agalactiae serotype Ia (strain ATCC 27591 / A909 / CDC SS700)</name>
    <dbReference type="NCBI Taxonomy" id="205921"/>
    <lineage>
        <taxon>Bacteria</taxon>
        <taxon>Bacillati</taxon>
        <taxon>Bacillota</taxon>
        <taxon>Bacilli</taxon>
        <taxon>Lactobacillales</taxon>
        <taxon>Streptococcaceae</taxon>
        <taxon>Streptococcus</taxon>
    </lineage>
</organism>
<name>YBEY_STRA1</name>
<keyword id="KW-0963">Cytoplasm</keyword>
<keyword id="KW-0255">Endonuclease</keyword>
<keyword id="KW-0378">Hydrolase</keyword>
<keyword id="KW-0479">Metal-binding</keyword>
<keyword id="KW-0540">Nuclease</keyword>
<keyword id="KW-0690">Ribosome biogenesis</keyword>
<keyword id="KW-0698">rRNA processing</keyword>
<keyword id="KW-0862">Zinc</keyword>
<dbReference type="EC" id="3.1.-.-" evidence="1"/>
<dbReference type="EMBL" id="CP000114">
    <property type="protein sequence ID" value="ABA45662.1"/>
    <property type="status" value="ALT_INIT"/>
    <property type="molecule type" value="Genomic_DNA"/>
</dbReference>
<dbReference type="RefSeq" id="WP_001867191.1">
    <property type="nucleotide sequence ID" value="NC_007432.1"/>
</dbReference>
<dbReference type="SMR" id="Q3K020"/>
<dbReference type="KEGG" id="sak:SAK_1527"/>
<dbReference type="HOGENOM" id="CLU_106710_3_0_9"/>
<dbReference type="GO" id="GO:0005737">
    <property type="term" value="C:cytoplasm"/>
    <property type="evidence" value="ECO:0007669"/>
    <property type="project" value="UniProtKB-SubCell"/>
</dbReference>
<dbReference type="GO" id="GO:0004222">
    <property type="term" value="F:metalloendopeptidase activity"/>
    <property type="evidence" value="ECO:0007669"/>
    <property type="project" value="InterPro"/>
</dbReference>
<dbReference type="GO" id="GO:0004521">
    <property type="term" value="F:RNA endonuclease activity"/>
    <property type="evidence" value="ECO:0007669"/>
    <property type="project" value="UniProtKB-UniRule"/>
</dbReference>
<dbReference type="GO" id="GO:0008270">
    <property type="term" value="F:zinc ion binding"/>
    <property type="evidence" value="ECO:0007669"/>
    <property type="project" value="UniProtKB-UniRule"/>
</dbReference>
<dbReference type="GO" id="GO:0006364">
    <property type="term" value="P:rRNA processing"/>
    <property type="evidence" value="ECO:0007669"/>
    <property type="project" value="UniProtKB-UniRule"/>
</dbReference>
<dbReference type="Gene3D" id="3.40.390.30">
    <property type="entry name" value="Metalloproteases ('zincins'), catalytic domain"/>
    <property type="match status" value="1"/>
</dbReference>
<dbReference type="HAMAP" id="MF_00009">
    <property type="entry name" value="Endoribonucl_YbeY"/>
    <property type="match status" value="1"/>
</dbReference>
<dbReference type="InterPro" id="IPR023091">
    <property type="entry name" value="MetalPrtase_cat_dom_sf_prd"/>
</dbReference>
<dbReference type="InterPro" id="IPR002036">
    <property type="entry name" value="YbeY"/>
</dbReference>
<dbReference type="InterPro" id="IPR020549">
    <property type="entry name" value="YbeY_CS"/>
</dbReference>
<dbReference type="NCBIfam" id="TIGR00043">
    <property type="entry name" value="rRNA maturation RNase YbeY"/>
    <property type="match status" value="1"/>
</dbReference>
<dbReference type="PANTHER" id="PTHR46986">
    <property type="entry name" value="ENDORIBONUCLEASE YBEY, CHLOROPLASTIC"/>
    <property type="match status" value="1"/>
</dbReference>
<dbReference type="PANTHER" id="PTHR46986:SF1">
    <property type="entry name" value="ENDORIBONUCLEASE YBEY, CHLOROPLASTIC"/>
    <property type="match status" value="1"/>
</dbReference>
<dbReference type="Pfam" id="PF02130">
    <property type="entry name" value="YbeY"/>
    <property type="match status" value="1"/>
</dbReference>
<dbReference type="SUPFAM" id="SSF55486">
    <property type="entry name" value="Metalloproteases ('zincins'), catalytic domain"/>
    <property type="match status" value="1"/>
</dbReference>
<dbReference type="PROSITE" id="PS01306">
    <property type="entry name" value="UPF0054"/>
    <property type="match status" value="1"/>
</dbReference>
<comment type="function">
    <text evidence="1">Single strand-specific metallo-endoribonuclease involved in late-stage 70S ribosome quality control and in maturation of the 3' terminus of the 16S rRNA.</text>
</comment>
<comment type="cofactor">
    <cofactor evidence="1">
        <name>Zn(2+)</name>
        <dbReference type="ChEBI" id="CHEBI:29105"/>
    </cofactor>
    <text evidence="1">Binds 1 zinc ion.</text>
</comment>
<comment type="subcellular location">
    <subcellularLocation>
        <location evidence="1">Cytoplasm</location>
    </subcellularLocation>
</comment>
<comment type="similarity">
    <text evidence="1">Belongs to the endoribonuclease YbeY family.</text>
</comment>
<comment type="sequence caution" evidence="2">
    <conflict type="erroneous initiation">
        <sequence resource="EMBL-CDS" id="ABA45662"/>
    </conflict>
</comment>
<feature type="chain" id="PRO_0000284324" description="Endoribonuclease YbeY">
    <location>
        <begin position="1"/>
        <end position="165"/>
    </location>
</feature>
<feature type="binding site" evidence="1">
    <location>
        <position position="130"/>
    </location>
    <ligand>
        <name>Zn(2+)</name>
        <dbReference type="ChEBI" id="CHEBI:29105"/>
        <note>catalytic</note>
    </ligand>
</feature>
<feature type="binding site" evidence="1">
    <location>
        <position position="134"/>
    </location>
    <ligand>
        <name>Zn(2+)</name>
        <dbReference type="ChEBI" id="CHEBI:29105"/>
        <note>catalytic</note>
    </ligand>
</feature>
<feature type="binding site" evidence="1">
    <location>
        <position position="140"/>
    </location>
    <ligand>
        <name>Zn(2+)</name>
        <dbReference type="ChEBI" id="CHEBI:29105"/>
        <note>catalytic</note>
    </ligand>
</feature>
<evidence type="ECO:0000255" key="1">
    <source>
        <dbReference type="HAMAP-Rule" id="MF_00009"/>
    </source>
</evidence>
<evidence type="ECO:0000305" key="2"/>
<protein>
    <recommendedName>
        <fullName evidence="1">Endoribonuclease YbeY</fullName>
        <ecNumber evidence="1">3.1.-.-</ecNumber>
    </recommendedName>
</protein>
<sequence length="165" mass="19280">MYVEMIDETGQVSEDIKKQTLDLLEFAAQKTGKENKEMAVTFVTNERSHELNLEYRDTDRPTDVISLEYKPEVDISFDEEDLAENPELAEMLEDFDSYIGELFISIDKAKEQAEEYGHSYEREMGFLAVHGFLHINGYDHYTPEEEKEMFSLQEEILTAYGLKRQ</sequence>